<feature type="chain" id="PRO_0000410701" description="Ion-translocating oxidoreductase complex subunit B">
    <location>
        <begin position="1"/>
        <end position="187"/>
    </location>
</feature>
<feature type="domain" description="4Fe-4S" evidence="1">
    <location>
        <begin position="29"/>
        <end position="88"/>
    </location>
</feature>
<feature type="domain" description="4Fe-4S ferredoxin-type 1" evidence="1">
    <location>
        <begin position="103"/>
        <end position="132"/>
    </location>
</feature>
<feature type="domain" description="4Fe-4S ferredoxin-type 2" evidence="1">
    <location>
        <begin position="133"/>
        <end position="162"/>
    </location>
</feature>
<feature type="region of interest" description="Hydrophobic" evidence="1">
    <location>
        <begin position="1"/>
        <end position="23"/>
    </location>
</feature>
<feature type="binding site" evidence="1">
    <location>
        <position position="46"/>
    </location>
    <ligand>
        <name>[4Fe-4S] cluster</name>
        <dbReference type="ChEBI" id="CHEBI:49883"/>
        <label>1</label>
    </ligand>
</feature>
<feature type="binding site" evidence="1">
    <location>
        <position position="49"/>
    </location>
    <ligand>
        <name>[4Fe-4S] cluster</name>
        <dbReference type="ChEBI" id="CHEBI:49883"/>
        <label>1</label>
    </ligand>
</feature>
<feature type="binding site" evidence="1">
    <location>
        <position position="54"/>
    </location>
    <ligand>
        <name>[4Fe-4S] cluster</name>
        <dbReference type="ChEBI" id="CHEBI:49883"/>
        <label>1</label>
    </ligand>
</feature>
<feature type="binding site" evidence="1">
    <location>
        <position position="71"/>
    </location>
    <ligand>
        <name>[4Fe-4S] cluster</name>
        <dbReference type="ChEBI" id="CHEBI:49883"/>
        <label>1</label>
    </ligand>
</feature>
<feature type="binding site" evidence="1">
    <location>
        <position position="112"/>
    </location>
    <ligand>
        <name>[4Fe-4S] cluster</name>
        <dbReference type="ChEBI" id="CHEBI:49883"/>
        <label>2</label>
    </ligand>
</feature>
<feature type="binding site" evidence="1">
    <location>
        <position position="115"/>
    </location>
    <ligand>
        <name>[4Fe-4S] cluster</name>
        <dbReference type="ChEBI" id="CHEBI:49883"/>
        <label>2</label>
    </ligand>
</feature>
<feature type="binding site" evidence="1">
    <location>
        <position position="118"/>
    </location>
    <ligand>
        <name>[4Fe-4S] cluster</name>
        <dbReference type="ChEBI" id="CHEBI:49883"/>
        <label>2</label>
    </ligand>
</feature>
<feature type="binding site" evidence="1">
    <location>
        <position position="122"/>
    </location>
    <ligand>
        <name>[4Fe-4S] cluster</name>
        <dbReference type="ChEBI" id="CHEBI:49883"/>
        <label>3</label>
    </ligand>
</feature>
<feature type="binding site" evidence="1">
    <location>
        <position position="142"/>
    </location>
    <ligand>
        <name>[4Fe-4S] cluster</name>
        <dbReference type="ChEBI" id="CHEBI:49883"/>
        <label>3</label>
    </ligand>
</feature>
<feature type="binding site" evidence="1">
    <location>
        <position position="145"/>
    </location>
    <ligand>
        <name>[4Fe-4S] cluster</name>
        <dbReference type="ChEBI" id="CHEBI:49883"/>
        <label>3</label>
    </ligand>
</feature>
<feature type="binding site" evidence="1">
    <location>
        <position position="148"/>
    </location>
    <ligand>
        <name>[4Fe-4S] cluster</name>
        <dbReference type="ChEBI" id="CHEBI:49883"/>
        <label>3</label>
    </ligand>
</feature>
<feature type="binding site" evidence="1">
    <location>
        <position position="152"/>
    </location>
    <ligand>
        <name>[4Fe-4S] cluster</name>
        <dbReference type="ChEBI" id="CHEBI:49883"/>
        <label>2</label>
    </ligand>
</feature>
<protein>
    <recommendedName>
        <fullName evidence="1 4">Ion-translocating oxidoreductase complex subunit B</fullName>
        <ecNumber evidence="1 4">7.-.-.-</ecNumber>
    </recommendedName>
    <alternativeName>
        <fullName evidence="4">Nitrogen fixation protein RnfB</fullName>
    </alternativeName>
    <alternativeName>
        <fullName evidence="1 4">Rnf electron transport complex subunit B</fullName>
    </alternativeName>
</protein>
<sequence>MIAAAASMSALGLGLGYLLGAAARKFHVETPPIVEEIAKILPGTNCGACGFPGCNGLAEAMAEGNAPVTACTPGGRDVALALAEIVTVEAGADAGPIAEIEPMVAFVFEDHCTGCQKCFKRCPTDAIVGGAKQIHTVVMDACIGCDACIEVCPTEAIVSRVKPKTLKTWYWDKPQPGLVAASAETAA</sequence>
<gene>
    <name evidence="1 3" type="primary">rnfB</name>
    <name type="ordered locus">RCAP_rcc03288</name>
</gene>
<organism>
    <name type="scientific">Rhodobacter capsulatus (strain ATCC BAA-309 / NBRC 16581 / SB1003)</name>
    <dbReference type="NCBI Taxonomy" id="272942"/>
    <lineage>
        <taxon>Bacteria</taxon>
        <taxon>Pseudomonadati</taxon>
        <taxon>Pseudomonadota</taxon>
        <taxon>Alphaproteobacteria</taxon>
        <taxon>Rhodobacterales</taxon>
        <taxon>Rhodobacter group</taxon>
        <taxon>Rhodobacter</taxon>
    </lineage>
</organism>
<dbReference type="EC" id="7.-.-.-" evidence="1 4"/>
<dbReference type="EMBL" id="D13625">
    <property type="protein sequence ID" value="BAA02787.1"/>
    <property type="molecule type" value="Genomic_DNA"/>
</dbReference>
<dbReference type="EMBL" id="CP001312">
    <property type="protein sequence ID" value="ADE87012.1"/>
    <property type="molecule type" value="Genomic_DNA"/>
</dbReference>
<dbReference type="RefSeq" id="WP_013068984.1">
    <property type="nucleotide sequence ID" value="NC_014034.1"/>
</dbReference>
<dbReference type="STRING" id="272942.RCAP_rcc03288"/>
<dbReference type="GeneID" id="31492068"/>
<dbReference type="KEGG" id="rcp:RCAP_rcc03288"/>
<dbReference type="eggNOG" id="COG2878">
    <property type="taxonomic scope" value="Bacteria"/>
</dbReference>
<dbReference type="HOGENOM" id="CLU_063448_2_0_5"/>
<dbReference type="OrthoDB" id="9800445at2"/>
<dbReference type="Proteomes" id="UP000002361">
    <property type="component" value="Chromosome"/>
</dbReference>
<dbReference type="GO" id="GO:0005886">
    <property type="term" value="C:plasma membrane"/>
    <property type="evidence" value="ECO:0007669"/>
    <property type="project" value="UniProtKB-UniRule"/>
</dbReference>
<dbReference type="GO" id="GO:0042717">
    <property type="term" value="C:plasma membrane-derived chromatophore membrane"/>
    <property type="evidence" value="ECO:0007669"/>
    <property type="project" value="UniProtKB-SubCell"/>
</dbReference>
<dbReference type="GO" id="GO:0051539">
    <property type="term" value="F:4 iron, 4 sulfur cluster binding"/>
    <property type="evidence" value="ECO:0007669"/>
    <property type="project" value="UniProtKB-UniRule"/>
</dbReference>
<dbReference type="GO" id="GO:0009055">
    <property type="term" value="F:electron transfer activity"/>
    <property type="evidence" value="ECO:0007669"/>
    <property type="project" value="InterPro"/>
</dbReference>
<dbReference type="GO" id="GO:0046872">
    <property type="term" value="F:metal ion binding"/>
    <property type="evidence" value="ECO:0007669"/>
    <property type="project" value="UniProtKB-KW"/>
</dbReference>
<dbReference type="GO" id="GO:0022900">
    <property type="term" value="P:electron transport chain"/>
    <property type="evidence" value="ECO:0007669"/>
    <property type="project" value="UniProtKB-UniRule"/>
</dbReference>
<dbReference type="GO" id="GO:0009399">
    <property type="term" value="P:nitrogen fixation"/>
    <property type="evidence" value="ECO:0007669"/>
    <property type="project" value="UniProtKB-KW"/>
</dbReference>
<dbReference type="Gene3D" id="3.30.70.20">
    <property type="match status" value="1"/>
</dbReference>
<dbReference type="Gene3D" id="1.10.15.40">
    <property type="entry name" value="Electron transport complex subunit B, putative Fe-S cluster"/>
    <property type="match status" value="1"/>
</dbReference>
<dbReference type="HAMAP" id="MF_00463">
    <property type="entry name" value="RsxB_RnfB"/>
    <property type="match status" value="1"/>
</dbReference>
<dbReference type="InterPro" id="IPR007202">
    <property type="entry name" value="4Fe-4S_dom"/>
</dbReference>
<dbReference type="InterPro" id="IPR017896">
    <property type="entry name" value="4Fe4S_Fe-S-bd"/>
</dbReference>
<dbReference type="InterPro" id="IPR017900">
    <property type="entry name" value="4Fe4S_Fe_S_CS"/>
</dbReference>
<dbReference type="InterPro" id="IPR050395">
    <property type="entry name" value="4Fe4S_Ferredoxin_RnfB"/>
</dbReference>
<dbReference type="InterPro" id="IPR010207">
    <property type="entry name" value="Elect_transpt_cplx_RnfB/RsxB"/>
</dbReference>
<dbReference type="InterPro" id="IPR016463">
    <property type="entry name" value="RnfB/RsxB_Proteobac"/>
</dbReference>
<dbReference type="NCBIfam" id="TIGR01944">
    <property type="entry name" value="rnfB"/>
    <property type="match status" value="1"/>
</dbReference>
<dbReference type="PANTHER" id="PTHR43560">
    <property type="entry name" value="ION-TRANSLOCATING OXIDOREDUCTASE COMPLEX SUBUNIT B"/>
    <property type="match status" value="1"/>
</dbReference>
<dbReference type="PANTHER" id="PTHR43560:SF1">
    <property type="entry name" value="ION-TRANSLOCATING OXIDOREDUCTASE COMPLEX SUBUNIT B"/>
    <property type="match status" value="1"/>
</dbReference>
<dbReference type="Pfam" id="PF14697">
    <property type="entry name" value="Fer4_21"/>
    <property type="match status" value="1"/>
</dbReference>
<dbReference type="Pfam" id="PF04060">
    <property type="entry name" value="FeS"/>
    <property type="match status" value="1"/>
</dbReference>
<dbReference type="PIRSF" id="PIRSF005784">
    <property type="entry name" value="Elect_transpt_RnfB"/>
    <property type="match status" value="1"/>
</dbReference>
<dbReference type="SUPFAM" id="SSF54862">
    <property type="entry name" value="4Fe-4S ferredoxins"/>
    <property type="match status" value="1"/>
</dbReference>
<dbReference type="PROSITE" id="PS51656">
    <property type="entry name" value="4FE4S"/>
    <property type="match status" value="1"/>
</dbReference>
<dbReference type="PROSITE" id="PS00198">
    <property type="entry name" value="4FE4S_FER_1"/>
    <property type="match status" value="2"/>
</dbReference>
<dbReference type="PROSITE" id="PS51379">
    <property type="entry name" value="4FE4S_FER_2"/>
    <property type="match status" value="2"/>
</dbReference>
<keyword id="KW-0004">4Fe-4S</keyword>
<keyword id="KW-0249">Electron transport</keyword>
<keyword id="KW-0408">Iron</keyword>
<keyword id="KW-0411">Iron-sulfur</keyword>
<keyword id="KW-0472">Membrane</keyword>
<keyword id="KW-0479">Metal-binding</keyword>
<keyword id="KW-0535">Nitrogen fixation</keyword>
<keyword id="KW-1185">Reference proteome</keyword>
<keyword id="KW-0677">Repeat</keyword>
<keyword id="KW-1278">Translocase</keyword>
<keyword id="KW-0813">Transport</keyword>
<proteinExistence type="inferred from homology"/>
<evidence type="ECO:0000255" key="1">
    <source>
        <dbReference type="HAMAP-Rule" id="MF_00463"/>
    </source>
</evidence>
<evidence type="ECO:0000269" key="2">
    <source>
    </source>
</evidence>
<evidence type="ECO:0000303" key="3">
    <source>
    </source>
</evidence>
<evidence type="ECO:0000305" key="4"/>
<name>RNFB_RHOCB</name>
<reference key="1">
    <citation type="journal article" date="1993" name="Plant Cell Physiol.">
        <title>Nucleotide sequence and genetic analysis of the region essential for functional expression of the gene for ferredoxin I, fdxN, in Rhodobacter capsulatus: sharing of one upstream activator sequence in opposite directions by two operons related to nitrogen fixation.</title>
        <authorList>
            <person name="Saeki K."/>
            <person name="Tokuda K."/>
            <person name="Fujiwara T."/>
            <person name="Matsubara H."/>
        </authorList>
    </citation>
    <scope>NUCLEOTIDE SEQUENCE [GENOMIC DNA]</scope>
    <source>
        <strain>ATCC BAA-309 / NBRC 16581 / SB1003</strain>
    </source>
</reference>
<reference key="2">
    <citation type="journal article" date="2010" name="J. Bacteriol.">
        <title>Complete genome sequence of the photosynthetic purple nonsulfur bacterium Rhodobacter capsulatus SB 1003.</title>
        <authorList>
            <person name="Strnad H."/>
            <person name="Lapidus A."/>
            <person name="Paces J."/>
            <person name="Ulbrich P."/>
            <person name="Vlcek C."/>
            <person name="Paces V."/>
            <person name="Haselkorn R."/>
        </authorList>
    </citation>
    <scope>NUCLEOTIDE SEQUENCE [LARGE SCALE GENOMIC DNA]</scope>
    <source>
        <strain>ATCC BAA-309 / NBRC 16581 / SB1003</strain>
    </source>
</reference>
<reference key="3">
    <citation type="journal article" date="1997" name="Biochemistry">
        <title>Membrane localization, topology, and mutual stabilization of the rnfABC gene products in Rhodobacter capsulatus and implications for a new family of energy-coupling NADH oxidoreductases.</title>
        <authorList>
            <person name="Kumagai H."/>
            <person name="Fujiwara T."/>
            <person name="Matsubara H."/>
            <person name="Saeki K."/>
        </authorList>
    </citation>
    <scope>FUNCTION</scope>
    <scope>SUBCELLULAR LOCATION</scope>
    <source>
        <strain>ATCC BAA-309 / NBRC 16581 / SB1003</strain>
    </source>
</reference>
<comment type="function">
    <text evidence="1 2">Part of a membrane-bound complex that couples electron transfer with translocation of ions across the membrane (By similarity). Required for nitrogen fixation. Stabilizes RnfC (PubMed:9154934).</text>
</comment>
<comment type="cofactor">
    <cofactor evidence="1">
        <name>[4Fe-4S] cluster</name>
        <dbReference type="ChEBI" id="CHEBI:49883"/>
    </cofactor>
    <text evidence="1">Binds 3 [4Fe-4S] clusters.</text>
</comment>
<comment type="subunit">
    <text evidence="1">The complex is composed of six subunits: RnfA, RnfB, RnfC, RnfD, RnfE and RnfG.</text>
</comment>
<comment type="subcellular location">
    <subcellularLocation>
        <location evidence="1 2">Cellular chromatophore membrane</location>
        <topology evidence="1 2">Peripheral membrane protein</topology>
        <orientation evidence="1 2">Cytoplasmic side</orientation>
    </subcellularLocation>
</comment>
<comment type="similarity">
    <text evidence="1">Belongs to the 4Fe4S bacterial-type ferredoxin family. RnfB subfamily.</text>
</comment>
<accession>D5ARZ0</accession>
<accession>O08056</accession>
<accession>Q07394</accession>